<comment type="catalytic activity">
    <reaction>
        <text>tRNA(Lys) + L-lysine + ATP = L-lysyl-tRNA(Lys) + AMP + diphosphate</text>
        <dbReference type="Rhea" id="RHEA:20792"/>
        <dbReference type="Rhea" id="RHEA-COMP:9696"/>
        <dbReference type="Rhea" id="RHEA-COMP:9697"/>
        <dbReference type="ChEBI" id="CHEBI:30616"/>
        <dbReference type="ChEBI" id="CHEBI:32551"/>
        <dbReference type="ChEBI" id="CHEBI:33019"/>
        <dbReference type="ChEBI" id="CHEBI:78442"/>
        <dbReference type="ChEBI" id="CHEBI:78529"/>
        <dbReference type="ChEBI" id="CHEBI:456215"/>
        <dbReference type="EC" id="6.1.1.6"/>
    </reaction>
</comment>
<comment type="cofactor">
    <cofactor evidence="1">
        <name>Mg(2+)</name>
        <dbReference type="ChEBI" id="CHEBI:18420"/>
    </cofactor>
    <text evidence="1">Binds 3 Mg(2+) ions per subunit.</text>
</comment>
<comment type="subunit">
    <text evidence="1">Homodimer.</text>
</comment>
<comment type="subcellular location">
    <subcellularLocation>
        <location evidence="1">Cytoplasm</location>
    </subcellularLocation>
</comment>
<comment type="similarity">
    <text evidence="2">Belongs to the class-II aminoacyl-tRNA synthetase family.</text>
</comment>
<name>SYK2_ECO57</name>
<keyword id="KW-0007">Acetylation</keyword>
<keyword id="KW-0030">Aminoacyl-tRNA synthetase</keyword>
<keyword id="KW-0067">ATP-binding</keyword>
<keyword id="KW-0963">Cytoplasm</keyword>
<keyword id="KW-0436">Ligase</keyword>
<keyword id="KW-0460">Magnesium</keyword>
<keyword id="KW-0479">Metal-binding</keyword>
<keyword id="KW-0547">Nucleotide-binding</keyword>
<keyword id="KW-0648">Protein biosynthesis</keyword>
<keyword id="KW-1185">Reference proteome</keyword>
<feature type="initiator methionine" description="Removed" evidence="1">
    <location>
        <position position="1"/>
    </location>
</feature>
<feature type="chain" id="PRO_0000152628" description="Lysine--tRNA ligase, heat inducible">
    <location>
        <begin position="2"/>
        <end position="505"/>
    </location>
</feature>
<feature type="binding site" evidence="1">
    <location>
        <position position="415"/>
    </location>
    <ligand>
        <name>Mg(2+)</name>
        <dbReference type="ChEBI" id="CHEBI:18420"/>
        <label>1</label>
    </ligand>
</feature>
<feature type="binding site" evidence="1">
    <location>
        <position position="422"/>
    </location>
    <ligand>
        <name>Mg(2+)</name>
        <dbReference type="ChEBI" id="CHEBI:18420"/>
        <label>1</label>
    </ligand>
</feature>
<feature type="binding site" evidence="1">
    <location>
        <position position="422"/>
    </location>
    <ligand>
        <name>Mg(2+)</name>
        <dbReference type="ChEBI" id="CHEBI:18420"/>
        <label>2</label>
    </ligand>
</feature>
<feature type="modified residue" description="N6-acetyllysine" evidence="1">
    <location>
        <position position="114"/>
    </location>
</feature>
<feature type="modified residue" description="N6-acetyllysine" evidence="1">
    <location>
        <position position="156"/>
    </location>
</feature>
<dbReference type="EC" id="6.1.1.6"/>
<dbReference type="EMBL" id="AE005174">
    <property type="protein sequence ID" value="AAG59329.1"/>
    <property type="molecule type" value="Genomic_DNA"/>
</dbReference>
<dbReference type="EMBL" id="BA000007">
    <property type="protein sequence ID" value="BAB38534.1"/>
    <property type="molecule type" value="Genomic_DNA"/>
</dbReference>
<dbReference type="PIR" id="E86108">
    <property type="entry name" value="E86108"/>
</dbReference>
<dbReference type="PIR" id="G91267">
    <property type="entry name" value="G91267"/>
</dbReference>
<dbReference type="SMR" id="P0A8N6"/>
<dbReference type="STRING" id="155864.Z5732"/>
<dbReference type="KEGG" id="ece:Z5732"/>
<dbReference type="KEGG" id="ecs:ECs_5111"/>
<dbReference type="PATRIC" id="fig|386585.9.peg.5342"/>
<dbReference type="eggNOG" id="COG1190">
    <property type="taxonomic scope" value="Bacteria"/>
</dbReference>
<dbReference type="HOGENOM" id="CLU_008255_6_0_6"/>
<dbReference type="OMA" id="WESTHHA"/>
<dbReference type="Proteomes" id="UP000000558">
    <property type="component" value="Chromosome"/>
</dbReference>
<dbReference type="Proteomes" id="UP000002519">
    <property type="component" value="Chromosome"/>
</dbReference>
<dbReference type="GO" id="GO:0005829">
    <property type="term" value="C:cytosol"/>
    <property type="evidence" value="ECO:0007669"/>
    <property type="project" value="TreeGrafter"/>
</dbReference>
<dbReference type="GO" id="GO:0005524">
    <property type="term" value="F:ATP binding"/>
    <property type="evidence" value="ECO:0007669"/>
    <property type="project" value="UniProtKB-UniRule"/>
</dbReference>
<dbReference type="GO" id="GO:0004824">
    <property type="term" value="F:lysine-tRNA ligase activity"/>
    <property type="evidence" value="ECO:0007669"/>
    <property type="project" value="UniProtKB-UniRule"/>
</dbReference>
<dbReference type="GO" id="GO:0000287">
    <property type="term" value="F:magnesium ion binding"/>
    <property type="evidence" value="ECO:0007669"/>
    <property type="project" value="UniProtKB-UniRule"/>
</dbReference>
<dbReference type="GO" id="GO:0000049">
    <property type="term" value="F:tRNA binding"/>
    <property type="evidence" value="ECO:0007669"/>
    <property type="project" value="TreeGrafter"/>
</dbReference>
<dbReference type="GO" id="GO:0006430">
    <property type="term" value="P:lysyl-tRNA aminoacylation"/>
    <property type="evidence" value="ECO:0007669"/>
    <property type="project" value="UniProtKB-UniRule"/>
</dbReference>
<dbReference type="CDD" id="cd00775">
    <property type="entry name" value="LysRS_core"/>
    <property type="match status" value="1"/>
</dbReference>
<dbReference type="CDD" id="cd04322">
    <property type="entry name" value="LysRS_N"/>
    <property type="match status" value="1"/>
</dbReference>
<dbReference type="FunFam" id="2.40.50.140:FF:000024">
    <property type="entry name" value="Lysine--tRNA ligase"/>
    <property type="match status" value="1"/>
</dbReference>
<dbReference type="FunFam" id="3.30.930.10:FF:000001">
    <property type="entry name" value="Lysine--tRNA ligase"/>
    <property type="match status" value="1"/>
</dbReference>
<dbReference type="Gene3D" id="3.30.930.10">
    <property type="entry name" value="Bira Bifunctional Protein, Domain 2"/>
    <property type="match status" value="1"/>
</dbReference>
<dbReference type="Gene3D" id="2.40.50.140">
    <property type="entry name" value="Nucleic acid-binding proteins"/>
    <property type="match status" value="1"/>
</dbReference>
<dbReference type="HAMAP" id="MF_00252">
    <property type="entry name" value="Lys_tRNA_synth_class2"/>
    <property type="match status" value="1"/>
</dbReference>
<dbReference type="InterPro" id="IPR004364">
    <property type="entry name" value="Aa-tRNA-synt_II"/>
</dbReference>
<dbReference type="InterPro" id="IPR006195">
    <property type="entry name" value="aa-tRNA-synth_II"/>
</dbReference>
<dbReference type="InterPro" id="IPR045864">
    <property type="entry name" value="aa-tRNA-synth_II/BPL/LPL"/>
</dbReference>
<dbReference type="InterPro" id="IPR002313">
    <property type="entry name" value="Lys-tRNA-ligase_II"/>
</dbReference>
<dbReference type="InterPro" id="IPR034762">
    <property type="entry name" value="Lys-tRNA-ligase_II_bac/euk"/>
</dbReference>
<dbReference type="InterPro" id="IPR044136">
    <property type="entry name" value="Lys-tRNA-ligase_II_N"/>
</dbReference>
<dbReference type="InterPro" id="IPR018149">
    <property type="entry name" value="Lys-tRNA-synth_II_C"/>
</dbReference>
<dbReference type="InterPro" id="IPR012340">
    <property type="entry name" value="NA-bd_OB-fold"/>
</dbReference>
<dbReference type="InterPro" id="IPR004365">
    <property type="entry name" value="NA-bd_OB_tRNA"/>
</dbReference>
<dbReference type="NCBIfam" id="TIGR00499">
    <property type="entry name" value="lysS_bact"/>
    <property type="match status" value="1"/>
</dbReference>
<dbReference type="NCBIfam" id="NF001756">
    <property type="entry name" value="PRK00484.1"/>
    <property type="match status" value="1"/>
</dbReference>
<dbReference type="NCBIfam" id="NF009101">
    <property type="entry name" value="PRK12445.1"/>
    <property type="match status" value="1"/>
</dbReference>
<dbReference type="PANTHER" id="PTHR42918:SF15">
    <property type="entry name" value="LYSINE--TRNA LIGASE, CHLOROPLASTIC_MITOCHONDRIAL"/>
    <property type="match status" value="1"/>
</dbReference>
<dbReference type="PANTHER" id="PTHR42918">
    <property type="entry name" value="LYSYL-TRNA SYNTHETASE"/>
    <property type="match status" value="1"/>
</dbReference>
<dbReference type="Pfam" id="PF00152">
    <property type="entry name" value="tRNA-synt_2"/>
    <property type="match status" value="1"/>
</dbReference>
<dbReference type="Pfam" id="PF01336">
    <property type="entry name" value="tRNA_anti-codon"/>
    <property type="match status" value="1"/>
</dbReference>
<dbReference type="PIRSF" id="PIRSF039101">
    <property type="entry name" value="LysRS2"/>
    <property type="match status" value="1"/>
</dbReference>
<dbReference type="PRINTS" id="PR00982">
    <property type="entry name" value="TRNASYNTHLYS"/>
</dbReference>
<dbReference type="SUPFAM" id="SSF55681">
    <property type="entry name" value="Class II aaRS and biotin synthetases"/>
    <property type="match status" value="1"/>
</dbReference>
<dbReference type="SUPFAM" id="SSF50249">
    <property type="entry name" value="Nucleic acid-binding proteins"/>
    <property type="match status" value="1"/>
</dbReference>
<dbReference type="PROSITE" id="PS50862">
    <property type="entry name" value="AA_TRNA_LIGASE_II"/>
    <property type="match status" value="1"/>
</dbReference>
<accession>P0A8N6</accession>
<accession>P14825</accession>
<sequence>MSEQETRGANEAIDFNDELRNRREKLAALRQQGVAFPNDFRRDHTSDQLHEEFDAKDNQELESLNIEVSVAGRMMTRRIMGKASFVTLQDVGGRIQLYVARDSLPEGVYNDQFKKWDLGDIIGARGTLFKTQTGELSIHCTELRLLTKALRPLPDKFHGLQDQEVRYRQRYLDLIANDKSRQTFVVRSKILAAIRQFMVARGFMEVETPMMQVIPGGASARPFITHHNALDLDMYLRIAPELYLKRLVVGGFERVFEINRNFRNEGISVRHNPEFTMMELYMAYADYHDLIELTESLFRTLAQEVLGTTKVTYGEHVFDFGKPFEKLTMREAIKKYRPETDMADLDNFDAAKALAESIGITVEKSWGLGRIVTEIFDEVAEAHLIQPTFITEYPAEVSPLARRNDVNPEITDRFEFFIGGREIGNGFSELNDAEDQAERFQEQVNAKAAGDDEAMFYDEDYVTALEYGLPPTAGLGIGIDRMIMLFTNSHTIRDVILFPAMRPQK</sequence>
<organism>
    <name type="scientific">Escherichia coli O157:H7</name>
    <dbReference type="NCBI Taxonomy" id="83334"/>
    <lineage>
        <taxon>Bacteria</taxon>
        <taxon>Pseudomonadati</taxon>
        <taxon>Pseudomonadota</taxon>
        <taxon>Gammaproteobacteria</taxon>
        <taxon>Enterobacterales</taxon>
        <taxon>Enterobacteriaceae</taxon>
        <taxon>Escherichia</taxon>
    </lineage>
</organism>
<proteinExistence type="inferred from homology"/>
<protein>
    <recommendedName>
        <fullName>Lysine--tRNA ligase, heat inducible</fullName>
        <ecNumber>6.1.1.6</ecNumber>
    </recommendedName>
    <alternativeName>
        <fullName>Lysyl-tRNA synthetase</fullName>
        <shortName>LysRS</shortName>
    </alternativeName>
</protein>
<evidence type="ECO:0000250" key="1"/>
<evidence type="ECO:0000305" key="2"/>
<reference key="1">
    <citation type="journal article" date="2001" name="Nature">
        <title>Genome sequence of enterohaemorrhagic Escherichia coli O157:H7.</title>
        <authorList>
            <person name="Perna N.T."/>
            <person name="Plunkett G. III"/>
            <person name="Burland V."/>
            <person name="Mau B."/>
            <person name="Glasner J.D."/>
            <person name="Rose D.J."/>
            <person name="Mayhew G.F."/>
            <person name="Evans P.S."/>
            <person name="Gregor J."/>
            <person name="Kirkpatrick H.A."/>
            <person name="Posfai G."/>
            <person name="Hackett J."/>
            <person name="Klink S."/>
            <person name="Boutin A."/>
            <person name="Shao Y."/>
            <person name="Miller L."/>
            <person name="Grotbeck E.J."/>
            <person name="Davis N.W."/>
            <person name="Lim A."/>
            <person name="Dimalanta E.T."/>
            <person name="Potamousis K."/>
            <person name="Apodaca J."/>
            <person name="Anantharaman T.S."/>
            <person name="Lin J."/>
            <person name="Yen G."/>
            <person name="Schwartz D.C."/>
            <person name="Welch R.A."/>
            <person name="Blattner F.R."/>
        </authorList>
    </citation>
    <scope>NUCLEOTIDE SEQUENCE [LARGE SCALE GENOMIC DNA]</scope>
    <source>
        <strain>O157:H7 / EDL933 / ATCC 700927 / EHEC</strain>
    </source>
</reference>
<reference key="2">
    <citation type="journal article" date="2001" name="DNA Res.">
        <title>Complete genome sequence of enterohemorrhagic Escherichia coli O157:H7 and genomic comparison with a laboratory strain K-12.</title>
        <authorList>
            <person name="Hayashi T."/>
            <person name="Makino K."/>
            <person name="Ohnishi M."/>
            <person name="Kurokawa K."/>
            <person name="Ishii K."/>
            <person name="Yokoyama K."/>
            <person name="Han C.-G."/>
            <person name="Ohtsubo E."/>
            <person name="Nakayama K."/>
            <person name="Murata T."/>
            <person name="Tanaka M."/>
            <person name="Tobe T."/>
            <person name="Iida T."/>
            <person name="Takami H."/>
            <person name="Honda T."/>
            <person name="Sasakawa C."/>
            <person name="Ogasawara N."/>
            <person name="Yasunaga T."/>
            <person name="Kuhara S."/>
            <person name="Shiba T."/>
            <person name="Hattori M."/>
            <person name="Shinagawa H."/>
        </authorList>
    </citation>
    <scope>NUCLEOTIDE SEQUENCE [LARGE SCALE GENOMIC DNA]</scope>
    <source>
        <strain>O157:H7 / Sakai / RIMD 0509952 / EHEC</strain>
    </source>
</reference>
<gene>
    <name type="primary">lysU</name>
    <name type="ordered locus">Z5732</name>
    <name type="ordered locus">ECs5111</name>
</gene>